<evidence type="ECO:0000255" key="1">
    <source>
        <dbReference type="HAMAP-Rule" id="MF_00437"/>
    </source>
</evidence>
<dbReference type="EMBL" id="DQ229107">
    <property type="protein sequence ID" value="ABA61896.1"/>
    <property type="molecule type" value="Genomic_DNA"/>
</dbReference>
<dbReference type="RefSeq" id="YP_635755.1">
    <property type="nucleotide sequence ID" value="NC_008097.1"/>
</dbReference>
<dbReference type="GeneID" id="4100245"/>
<dbReference type="GO" id="GO:0009535">
    <property type="term" value="C:chloroplast thylakoid membrane"/>
    <property type="evidence" value="ECO:0007669"/>
    <property type="project" value="UniProtKB-SubCell"/>
</dbReference>
<dbReference type="GO" id="GO:0009522">
    <property type="term" value="C:photosystem I"/>
    <property type="evidence" value="ECO:0007669"/>
    <property type="project" value="InterPro"/>
</dbReference>
<dbReference type="GO" id="GO:0015979">
    <property type="term" value="P:photosynthesis"/>
    <property type="evidence" value="ECO:0007669"/>
    <property type="project" value="UniProtKB-UniRule"/>
</dbReference>
<dbReference type="HAMAP" id="MF_00437">
    <property type="entry name" value="Ycf4"/>
    <property type="match status" value="1"/>
</dbReference>
<dbReference type="InterPro" id="IPR003359">
    <property type="entry name" value="PSI_Ycf4_assembly"/>
</dbReference>
<dbReference type="PANTHER" id="PTHR33288">
    <property type="match status" value="1"/>
</dbReference>
<dbReference type="PANTHER" id="PTHR33288:SF4">
    <property type="entry name" value="PHOTOSYSTEM I ASSEMBLY PROTEIN YCF4"/>
    <property type="match status" value="1"/>
</dbReference>
<dbReference type="Pfam" id="PF02392">
    <property type="entry name" value="Ycf4"/>
    <property type="match status" value="1"/>
</dbReference>
<keyword id="KW-0150">Chloroplast</keyword>
<keyword id="KW-0472">Membrane</keyword>
<keyword id="KW-0602">Photosynthesis</keyword>
<keyword id="KW-0934">Plastid</keyword>
<keyword id="KW-0793">Thylakoid</keyword>
<keyword id="KW-0812">Transmembrane</keyword>
<keyword id="KW-1133">Transmembrane helix</keyword>
<geneLocation type="chloroplast"/>
<organism>
    <name type="scientific">Chara vulgaris</name>
    <name type="common">Common stonewort</name>
    <dbReference type="NCBI Taxonomy" id="55564"/>
    <lineage>
        <taxon>Eukaryota</taxon>
        <taxon>Viridiplantae</taxon>
        <taxon>Streptophyta</taxon>
        <taxon>Charophyceae</taxon>
        <taxon>Charales</taxon>
        <taxon>Characeae</taxon>
        <taxon>Chara</taxon>
    </lineage>
</organism>
<reference key="1">
    <citation type="journal article" date="2006" name="Mol. Biol. Evol.">
        <title>The chloroplast genome sequence of Chara vulgaris sheds new light into the closest green algal relatives of land plants.</title>
        <authorList>
            <person name="Turmel M."/>
            <person name="Otis C."/>
            <person name="Lemieux C."/>
        </authorList>
    </citation>
    <scope>NUCLEOTIDE SEQUENCE [LARGE SCALE GENOMIC DNA]</scope>
</reference>
<name>YCF4_CHAVU</name>
<sequence length="187" mass="21664">MKIKPCKSQVFRLEPIIGSRKYINYFWSFSIFFGAFGFLIVGICSYLKKELFFFSAENIIFIPQGAVMCFYGIAGIFLSFYLWFTMILGVGSGFNEFNKNEGIVNIFRWGFPGQNRRIKICCLIKDIKSIRIYIRDGISPRSALYLKIRGMPDIPLDVIEDRFNLNEIEKRATELASFLRVPIEGLE</sequence>
<protein>
    <recommendedName>
        <fullName evidence="1">Photosystem I assembly protein Ycf4</fullName>
    </recommendedName>
</protein>
<gene>
    <name evidence="1" type="primary">ycf4</name>
</gene>
<accession>Q1ACJ2</accession>
<comment type="function">
    <text evidence="1">Seems to be required for the assembly of the photosystem I complex.</text>
</comment>
<comment type="subcellular location">
    <subcellularLocation>
        <location evidence="1">Plastid</location>
        <location evidence="1">Chloroplast thylakoid membrane</location>
        <topology evidence="1">Multi-pass membrane protein</topology>
    </subcellularLocation>
</comment>
<comment type="similarity">
    <text evidence="1">Belongs to the Ycf4 family.</text>
</comment>
<feature type="chain" id="PRO_0000275648" description="Photosystem I assembly protein Ycf4">
    <location>
        <begin position="1"/>
        <end position="187"/>
    </location>
</feature>
<feature type="transmembrane region" description="Helical" evidence="1">
    <location>
        <begin position="23"/>
        <end position="43"/>
    </location>
</feature>
<feature type="transmembrane region" description="Helical" evidence="1">
    <location>
        <begin position="70"/>
        <end position="90"/>
    </location>
</feature>
<proteinExistence type="inferred from homology"/>